<sequence length="437" mass="48872">MNYTTQMDAAKKGIVTKEMEIVAKKENMNVKDLMKLVSKGKVAIPANKNHKSLDPEGIGQGLRTKINVNLGISKDCYNIDMELEKVQKAIDMKAEAIMDLSCFGKTEEFRKRLIDMSPAIIGTVPIYDAVGFYDKELKDITSEEFLKVAEKHAENGADFLTIHVGMNRKTAATFKKNPRRMNIVSRGGSLLYAWMELNNKENPFYEGFDKLLDICEKYDVTLSLGDACRPGCIEDSTDASQIEELIALGELTKRAWERNVQVIIEGPGHMTLDEIETNMKIEKKLCHGAPFYVLGPIVTDIAPGYDHITSAIGGAIAATHGADFLCYVTPAEHLRLPNLDDMKEGIIATKIAAHAADLAKGVKGARDWDNAMAKARRDLDWERMFELSIDEEKARRYREESKAKSKDSCTMCGKMCAVRNMNRVTEGKDLNMLRDDD</sequence>
<comment type="function">
    <text evidence="1">Catalyzes the synthesis of the hydroxymethylpyrimidine phosphate (HMP-P) moiety of thiamine from aminoimidazole ribotide (AIR) in a radical S-adenosyl-L-methionine (SAM)-dependent reaction.</text>
</comment>
<comment type="catalytic activity">
    <reaction evidence="1">
        <text>5-amino-1-(5-phospho-beta-D-ribosyl)imidazole + S-adenosyl-L-methionine = 4-amino-2-methyl-5-(phosphooxymethyl)pyrimidine + CO + 5'-deoxyadenosine + formate + L-methionine + 3 H(+)</text>
        <dbReference type="Rhea" id="RHEA:24840"/>
        <dbReference type="ChEBI" id="CHEBI:15378"/>
        <dbReference type="ChEBI" id="CHEBI:15740"/>
        <dbReference type="ChEBI" id="CHEBI:17245"/>
        <dbReference type="ChEBI" id="CHEBI:17319"/>
        <dbReference type="ChEBI" id="CHEBI:57844"/>
        <dbReference type="ChEBI" id="CHEBI:58354"/>
        <dbReference type="ChEBI" id="CHEBI:59789"/>
        <dbReference type="ChEBI" id="CHEBI:137981"/>
        <dbReference type="EC" id="4.1.99.17"/>
    </reaction>
</comment>
<comment type="cofactor">
    <cofactor evidence="1">
        <name>[4Fe-4S] cluster</name>
        <dbReference type="ChEBI" id="CHEBI:49883"/>
    </cofactor>
    <text evidence="1">Binds 1 [4Fe-4S] cluster per subunit. The cluster is coordinated with 3 cysteines and an exchangeable S-adenosyl-L-methionine.</text>
</comment>
<comment type="pathway">
    <text evidence="1">Cofactor biosynthesis; thiamine diphosphate biosynthesis.</text>
</comment>
<comment type="similarity">
    <text evidence="1">Belongs to the ThiC family.</text>
</comment>
<protein>
    <recommendedName>
        <fullName evidence="1">Phosphomethylpyrimidine synthase</fullName>
        <ecNumber evidence="1">4.1.99.17</ecNumber>
    </recommendedName>
    <alternativeName>
        <fullName evidence="1">Hydroxymethylpyrimidine phosphate synthase</fullName>
        <shortName evidence="1">HMP-P synthase</shortName>
        <shortName evidence="1">HMP-phosphate synthase</shortName>
        <shortName evidence="1">HMPP synthase</shortName>
    </alternativeName>
    <alternativeName>
        <fullName evidence="1">Thiamine biosynthesis protein ThiC</fullName>
    </alternativeName>
</protein>
<name>THIC_CLOBK</name>
<proteinExistence type="inferred from homology"/>
<keyword id="KW-0004">4Fe-4S</keyword>
<keyword id="KW-0408">Iron</keyword>
<keyword id="KW-0411">Iron-sulfur</keyword>
<keyword id="KW-0456">Lyase</keyword>
<keyword id="KW-0479">Metal-binding</keyword>
<keyword id="KW-0949">S-adenosyl-L-methionine</keyword>
<keyword id="KW-0784">Thiamine biosynthesis</keyword>
<keyword id="KW-0862">Zinc</keyword>
<evidence type="ECO:0000255" key="1">
    <source>
        <dbReference type="HAMAP-Rule" id="MF_00089"/>
    </source>
</evidence>
<dbReference type="EC" id="4.1.99.17" evidence="1"/>
<dbReference type="EMBL" id="CP000939">
    <property type="protein sequence ID" value="ACA45202.1"/>
    <property type="molecule type" value="Genomic_DNA"/>
</dbReference>
<dbReference type="RefSeq" id="WP_015957812.1">
    <property type="nucleotide sequence ID" value="NC_010516.1"/>
</dbReference>
<dbReference type="SMR" id="B1ILH9"/>
<dbReference type="KEGG" id="cbb:CLD_1631"/>
<dbReference type="HOGENOM" id="CLU_013181_2_2_9"/>
<dbReference type="UniPathway" id="UPA00060"/>
<dbReference type="Proteomes" id="UP000008541">
    <property type="component" value="Chromosome"/>
</dbReference>
<dbReference type="GO" id="GO:0005829">
    <property type="term" value="C:cytosol"/>
    <property type="evidence" value="ECO:0007669"/>
    <property type="project" value="TreeGrafter"/>
</dbReference>
<dbReference type="GO" id="GO:0051539">
    <property type="term" value="F:4 iron, 4 sulfur cluster binding"/>
    <property type="evidence" value="ECO:0007669"/>
    <property type="project" value="UniProtKB-KW"/>
</dbReference>
<dbReference type="GO" id="GO:0016830">
    <property type="term" value="F:carbon-carbon lyase activity"/>
    <property type="evidence" value="ECO:0007669"/>
    <property type="project" value="InterPro"/>
</dbReference>
<dbReference type="GO" id="GO:0008270">
    <property type="term" value="F:zinc ion binding"/>
    <property type="evidence" value="ECO:0007669"/>
    <property type="project" value="UniProtKB-UniRule"/>
</dbReference>
<dbReference type="GO" id="GO:0009228">
    <property type="term" value="P:thiamine biosynthetic process"/>
    <property type="evidence" value="ECO:0007669"/>
    <property type="project" value="UniProtKB-KW"/>
</dbReference>
<dbReference type="GO" id="GO:0009229">
    <property type="term" value="P:thiamine diphosphate biosynthetic process"/>
    <property type="evidence" value="ECO:0007669"/>
    <property type="project" value="UniProtKB-UniRule"/>
</dbReference>
<dbReference type="FunFam" id="3.20.20.540:FF:000001">
    <property type="entry name" value="Phosphomethylpyrimidine synthase"/>
    <property type="match status" value="1"/>
</dbReference>
<dbReference type="Gene3D" id="6.10.250.620">
    <property type="match status" value="1"/>
</dbReference>
<dbReference type="Gene3D" id="3.20.20.540">
    <property type="entry name" value="Radical SAM ThiC family, central domain"/>
    <property type="match status" value="1"/>
</dbReference>
<dbReference type="HAMAP" id="MF_00089">
    <property type="entry name" value="ThiC"/>
    <property type="match status" value="1"/>
</dbReference>
<dbReference type="InterPro" id="IPR037509">
    <property type="entry name" value="ThiC"/>
</dbReference>
<dbReference type="InterPro" id="IPR038521">
    <property type="entry name" value="ThiC/Bza_core_dom"/>
</dbReference>
<dbReference type="InterPro" id="IPR002817">
    <property type="entry name" value="ThiC/BzaA/B"/>
</dbReference>
<dbReference type="NCBIfam" id="NF009895">
    <property type="entry name" value="PRK13352.1"/>
    <property type="match status" value="1"/>
</dbReference>
<dbReference type="NCBIfam" id="TIGR00190">
    <property type="entry name" value="thiC"/>
    <property type="match status" value="1"/>
</dbReference>
<dbReference type="PANTHER" id="PTHR30557:SF1">
    <property type="entry name" value="PHOSPHOMETHYLPYRIMIDINE SYNTHASE, CHLOROPLASTIC"/>
    <property type="match status" value="1"/>
</dbReference>
<dbReference type="PANTHER" id="PTHR30557">
    <property type="entry name" value="THIAMINE BIOSYNTHESIS PROTEIN THIC"/>
    <property type="match status" value="1"/>
</dbReference>
<dbReference type="Pfam" id="PF01964">
    <property type="entry name" value="ThiC_Rad_SAM"/>
    <property type="match status" value="1"/>
</dbReference>
<dbReference type="SFLD" id="SFLDF00407">
    <property type="entry name" value="phosphomethylpyrimidine_syntha"/>
    <property type="match status" value="1"/>
</dbReference>
<dbReference type="SFLD" id="SFLDG01114">
    <property type="entry name" value="phosphomethylpyrimidine_syntha"/>
    <property type="match status" value="1"/>
</dbReference>
<dbReference type="SFLD" id="SFLDS00113">
    <property type="entry name" value="Radical_SAM_Phosphomethylpyrim"/>
    <property type="match status" value="1"/>
</dbReference>
<reference key="1">
    <citation type="journal article" date="2007" name="PLoS ONE">
        <title>Analysis of the neurotoxin complex genes in Clostridium botulinum A1-A4 and B1 strains: BoNT/A3, /Ba4 and /B1 clusters are located within plasmids.</title>
        <authorList>
            <person name="Smith T.J."/>
            <person name="Hill K.K."/>
            <person name="Foley B.T."/>
            <person name="Detter J.C."/>
            <person name="Munk A.C."/>
            <person name="Bruce D.C."/>
            <person name="Doggett N.A."/>
            <person name="Smith L.A."/>
            <person name="Marks J.D."/>
            <person name="Xie G."/>
            <person name="Brettin T.S."/>
        </authorList>
    </citation>
    <scope>NUCLEOTIDE SEQUENCE [LARGE SCALE GENOMIC DNA]</scope>
    <source>
        <strain>Okra / Type B1</strain>
    </source>
</reference>
<feature type="chain" id="PRO_1000093201" description="Phosphomethylpyrimidine synthase">
    <location>
        <begin position="1"/>
        <end position="437"/>
    </location>
</feature>
<feature type="binding site" evidence="1">
    <location>
        <position position="69"/>
    </location>
    <ligand>
        <name>substrate</name>
    </ligand>
</feature>
<feature type="binding site" evidence="1">
    <location>
        <position position="98"/>
    </location>
    <ligand>
        <name>substrate</name>
    </ligand>
</feature>
<feature type="binding site" evidence="1">
    <location>
        <position position="127"/>
    </location>
    <ligand>
        <name>substrate</name>
    </ligand>
</feature>
<feature type="binding site" evidence="1">
    <location>
        <position position="163"/>
    </location>
    <ligand>
        <name>substrate</name>
    </ligand>
</feature>
<feature type="binding site" evidence="1">
    <location>
        <begin position="185"/>
        <end position="187"/>
    </location>
    <ligand>
        <name>substrate</name>
    </ligand>
</feature>
<feature type="binding site" evidence="1">
    <location>
        <begin position="226"/>
        <end position="229"/>
    </location>
    <ligand>
        <name>substrate</name>
    </ligand>
</feature>
<feature type="binding site" evidence="1">
    <location>
        <position position="265"/>
    </location>
    <ligand>
        <name>substrate</name>
    </ligand>
</feature>
<feature type="binding site" evidence="1">
    <location>
        <position position="269"/>
    </location>
    <ligand>
        <name>Zn(2+)</name>
        <dbReference type="ChEBI" id="CHEBI:29105"/>
    </ligand>
</feature>
<feature type="binding site" evidence="1">
    <location>
        <position position="292"/>
    </location>
    <ligand>
        <name>substrate</name>
    </ligand>
</feature>
<feature type="binding site" evidence="1">
    <location>
        <position position="333"/>
    </location>
    <ligand>
        <name>Zn(2+)</name>
        <dbReference type="ChEBI" id="CHEBI:29105"/>
    </ligand>
</feature>
<feature type="binding site" evidence="1">
    <location>
        <position position="409"/>
    </location>
    <ligand>
        <name>[4Fe-4S] cluster</name>
        <dbReference type="ChEBI" id="CHEBI:49883"/>
        <note>4Fe-4S-S-AdoMet</note>
    </ligand>
</feature>
<feature type="binding site" evidence="1">
    <location>
        <position position="412"/>
    </location>
    <ligand>
        <name>[4Fe-4S] cluster</name>
        <dbReference type="ChEBI" id="CHEBI:49883"/>
        <note>4Fe-4S-S-AdoMet</note>
    </ligand>
</feature>
<feature type="binding site" evidence="1">
    <location>
        <position position="416"/>
    </location>
    <ligand>
        <name>[4Fe-4S] cluster</name>
        <dbReference type="ChEBI" id="CHEBI:49883"/>
        <note>4Fe-4S-S-AdoMet</note>
    </ligand>
</feature>
<gene>
    <name evidence="1" type="primary">thiC</name>
    <name type="ordered locus">CLD_1631</name>
</gene>
<organism>
    <name type="scientific">Clostridium botulinum (strain Okra / Type B1)</name>
    <dbReference type="NCBI Taxonomy" id="498213"/>
    <lineage>
        <taxon>Bacteria</taxon>
        <taxon>Bacillati</taxon>
        <taxon>Bacillota</taxon>
        <taxon>Clostridia</taxon>
        <taxon>Eubacteriales</taxon>
        <taxon>Clostridiaceae</taxon>
        <taxon>Clostridium</taxon>
    </lineage>
</organism>
<accession>B1ILH9</accession>